<dbReference type="EC" id="2.4.2.29" evidence="1"/>
<dbReference type="EMBL" id="BA000012">
    <property type="protein sequence ID" value="BAB48256.1"/>
    <property type="molecule type" value="Genomic_DNA"/>
</dbReference>
<dbReference type="RefSeq" id="WP_010909611.1">
    <property type="nucleotide sequence ID" value="NC_002678.2"/>
</dbReference>
<dbReference type="SMR" id="Q98M57"/>
<dbReference type="KEGG" id="mlo:mll0721"/>
<dbReference type="PATRIC" id="fig|266835.9.peg.580"/>
<dbReference type="eggNOG" id="COG0343">
    <property type="taxonomic scope" value="Bacteria"/>
</dbReference>
<dbReference type="HOGENOM" id="CLU_022060_0_1_5"/>
<dbReference type="UniPathway" id="UPA00392"/>
<dbReference type="Proteomes" id="UP000000552">
    <property type="component" value="Chromosome"/>
</dbReference>
<dbReference type="GO" id="GO:0005829">
    <property type="term" value="C:cytosol"/>
    <property type="evidence" value="ECO:0007669"/>
    <property type="project" value="TreeGrafter"/>
</dbReference>
<dbReference type="GO" id="GO:0008479">
    <property type="term" value="F:tRNA-guanosine(34) queuine transglycosylase activity"/>
    <property type="evidence" value="ECO:0007669"/>
    <property type="project" value="UniProtKB-UniRule"/>
</dbReference>
<dbReference type="GO" id="GO:0008616">
    <property type="term" value="P:queuosine biosynthetic process"/>
    <property type="evidence" value="ECO:0007669"/>
    <property type="project" value="UniProtKB-UniRule"/>
</dbReference>
<dbReference type="GO" id="GO:0002099">
    <property type="term" value="P:tRNA wobble guanine modification"/>
    <property type="evidence" value="ECO:0007669"/>
    <property type="project" value="TreeGrafter"/>
</dbReference>
<dbReference type="GO" id="GO:0101030">
    <property type="term" value="P:tRNA-guanine transglycosylation"/>
    <property type="evidence" value="ECO:0007669"/>
    <property type="project" value="InterPro"/>
</dbReference>
<dbReference type="FunFam" id="3.20.20.105:FF:000001">
    <property type="entry name" value="Queuine tRNA-ribosyltransferase"/>
    <property type="match status" value="1"/>
</dbReference>
<dbReference type="Gene3D" id="3.20.20.105">
    <property type="entry name" value="Queuine tRNA-ribosyltransferase-like"/>
    <property type="match status" value="1"/>
</dbReference>
<dbReference type="HAMAP" id="MF_00168">
    <property type="entry name" value="Q_tRNA_Tgt"/>
    <property type="match status" value="1"/>
</dbReference>
<dbReference type="InterPro" id="IPR050076">
    <property type="entry name" value="ArchSynthase1/Queuine_TRR"/>
</dbReference>
<dbReference type="InterPro" id="IPR004803">
    <property type="entry name" value="TGT"/>
</dbReference>
<dbReference type="InterPro" id="IPR036511">
    <property type="entry name" value="TGT-like_sf"/>
</dbReference>
<dbReference type="InterPro" id="IPR002616">
    <property type="entry name" value="tRNA_ribo_trans-like"/>
</dbReference>
<dbReference type="NCBIfam" id="TIGR00430">
    <property type="entry name" value="Q_tRNA_tgt"/>
    <property type="match status" value="1"/>
</dbReference>
<dbReference type="NCBIfam" id="TIGR00449">
    <property type="entry name" value="tgt_general"/>
    <property type="match status" value="1"/>
</dbReference>
<dbReference type="PANTHER" id="PTHR46499">
    <property type="entry name" value="QUEUINE TRNA-RIBOSYLTRANSFERASE"/>
    <property type="match status" value="1"/>
</dbReference>
<dbReference type="PANTHER" id="PTHR46499:SF1">
    <property type="entry name" value="QUEUINE TRNA-RIBOSYLTRANSFERASE"/>
    <property type="match status" value="1"/>
</dbReference>
<dbReference type="Pfam" id="PF01702">
    <property type="entry name" value="TGT"/>
    <property type="match status" value="1"/>
</dbReference>
<dbReference type="SUPFAM" id="SSF51713">
    <property type="entry name" value="tRNA-guanine transglycosylase"/>
    <property type="match status" value="1"/>
</dbReference>
<comment type="function">
    <text evidence="1">Catalyzes the base-exchange of a guanine (G) residue with the queuine precursor 7-aminomethyl-7-deazaguanine (PreQ1) at position 34 (anticodon wobble position) in tRNAs with GU(N) anticodons (tRNA-Asp, -Asn, -His and -Tyr). Catalysis occurs through a double-displacement mechanism. The nucleophile active site attacks the C1' of nucleotide 34 to detach the guanine base from the RNA, forming a covalent enzyme-RNA intermediate. The proton acceptor active site deprotonates the incoming PreQ1, allowing a nucleophilic attack on the C1' of the ribose to form the product. After dissociation, two additional enzymatic reactions on the tRNA convert PreQ1 to queuine (Q), resulting in the hypermodified nucleoside queuosine (7-(((4,5-cis-dihydroxy-2-cyclopenten-1-yl)amino)methyl)-7-deazaguanosine).</text>
</comment>
<comment type="catalytic activity">
    <reaction evidence="1">
        <text>7-aminomethyl-7-carbaguanine + guanosine(34) in tRNA = 7-aminomethyl-7-carbaguanosine(34) in tRNA + guanine</text>
        <dbReference type="Rhea" id="RHEA:24104"/>
        <dbReference type="Rhea" id="RHEA-COMP:10341"/>
        <dbReference type="Rhea" id="RHEA-COMP:10342"/>
        <dbReference type="ChEBI" id="CHEBI:16235"/>
        <dbReference type="ChEBI" id="CHEBI:58703"/>
        <dbReference type="ChEBI" id="CHEBI:74269"/>
        <dbReference type="ChEBI" id="CHEBI:82833"/>
        <dbReference type="EC" id="2.4.2.29"/>
    </reaction>
</comment>
<comment type="pathway">
    <text evidence="1">tRNA modification; tRNA-queuosine biosynthesis.</text>
</comment>
<comment type="subunit">
    <text evidence="1">Homodimer. Within each dimer, one monomer is responsible for RNA recognition and catalysis, while the other monomer binds to the replacement base PreQ1.</text>
</comment>
<comment type="similarity">
    <text evidence="1">Belongs to the queuine tRNA-ribosyltransferase family.</text>
</comment>
<evidence type="ECO:0000255" key="1">
    <source>
        <dbReference type="HAMAP-Rule" id="MF_00168"/>
    </source>
</evidence>
<proteinExistence type="inferred from homology"/>
<keyword id="KW-0328">Glycosyltransferase</keyword>
<keyword id="KW-0671">Queuosine biosynthesis</keyword>
<keyword id="KW-0808">Transferase</keyword>
<keyword id="KW-0819">tRNA processing</keyword>
<reference key="1">
    <citation type="journal article" date="2000" name="DNA Res.">
        <title>Complete genome structure of the nitrogen-fixing symbiotic bacterium Mesorhizobium loti.</title>
        <authorList>
            <person name="Kaneko T."/>
            <person name="Nakamura Y."/>
            <person name="Sato S."/>
            <person name="Asamizu E."/>
            <person name="Kato T."/>
            <person name="Sasamoto S."/>
            <person name="Watanabe A."/>
            <person name="Idesawa K."/>
            <person name="Ishikawa A."/>
            <person name="Kawashima K."/>
            <person name="Kimura T."/>
            <person name="Kishida Y."/>
            <person name="Kiyokawa C."/>
            <person name="Kohara M."/>
            <person name="Matsumoto M."/>
            <person name="Matsuno A."/>
            <person name="Mochizuki Y."/>
            <person name="Nakayama S."/>
            <person name="Nakazaki N."/>
            <person name="Shimpo S."/>
            <person name="Sugimoto M."/>
            <person name="Takeuchi C."/>
            <person name="Yamada M."/>
            <person name="Tabata S."/>
        </authorList>
    </citation>
    <scope>NUCLEOTIDE SEQUENCE [LARGE SCALE GENOMIC DNA]</scope>
    <source>
        <strain>LMG 29417 / CECT 9101 / MAFF 303099</strain>
    </source>
</reference>
<organism>
    <name type="scientific">Mesorhizobium japonicum (strain LMG 29417 / CECT 9101 / MAFF 303099)</name>
    <name type="common">Mesorhizobium loti (strain MAFF 303099)</name>
    <dbReference type="NCBI Taxonomy" id="266835"/>
    <lineage>
        <taxon>Bacteria</taxon>
        <taxon>Pseudomonadati</taxon>
        <taxon>Pseudomonadota</taxon>
        <taxon>Alphaproteobacteria</taxon>
        <taxon>Hyphomicrobiales</taxon>
        <taxon>Phyllobacteriaceae</taxon>
        <taxon>Mesorhizobium</taxon>
    </lineage>
</organism>
<gene>
    <name evidence="1" type="primary">tgt</name>
    <name type="ordered locus">mll0721</name>
</gene>
<accession>Q98M57</accession>
<protein>
    <recommendedName>
        <fullName evidence="1">Queuine tRNA-ribosyltransferase</fullName>
        <ecNumber evidence="1">2.4.2.29</ecNumber>
    </recommendedName>
    <alternativeName>
        <fullName evidence="1">Guanine insertion enzyme</fullName>
    </alternativeName>
    <alternativeName>
        <fullName evidence="1">tRNA-guanine transglycosylase</fullName>
    </alternativeName>
</protein>
<feature type="chain" id="PRO_0000135510" description="Queuine tRNA-ribosyltransferase">
    <location>
        <begin position="1"/>
        <end position="376"/>
    </location>
</feature>
<feature type="region of interest" description="RNA binding" evidence="1">
    <location>
        <begin position="248"/>
        <end position="254"/>
    </location>
</feature>
<feature type="region of interest" description="RNA binding; important for wobble base 34 recognition" evidence="1">
    <location>
        <begin position="272"/>
        <end position="276"/>
    </location>
</feature>
<feature type="active site" description="Proton acceptor" evidence="1">
    <location>
        <position position="93"/>
    </location>
</feature>
<feature type="active site" description="Nucleophile" evidence="1">
    <location>
        <position position="267"/>
    </location>
</feature>
<feature type="binding site" evidence="1">
    <location>
        <begin position="93"/>
        <end position="97"/>
    </location>
    <ligand>
        <name>substrate</name>
    </ligand>
</feature>
<feature type="binding site" evidence="1">
    <location>
        <position position="147"/>
    </location>
    <ligand>
        <name>substrate</name>
    </ligand>
</feature>
<feature type="binding site" evidence="1">
    <location>
        <position position="190"/>
    </location>
    <ligand>
        <name>substrate</name>
    </ligand>
</feature>
<feature type="binding site" evidence="1">
    <location>
        <position position="217"/>
    </location>
    <ligand>
        <name>substrate</name>
    </ligand>
</feature>
<sequence length="376" mass="41490">MAKPFSFKVLATDGRARRGIIDMPRGEIRTPAFMPVGTGGTVKTMYMDQVRGVGADIILGNTYHLMLRPGAERVARLGGLHEFARWPHPILTDSGGFQVMSLSKLRKLTEKGVTFRSHIDGAPYEMSPERSIEIQSLLDSDIQMQLDECTALPAELKEIERAMELSLRWAERCKTAFGDQPGKAMFGIVQGGDNAALRVRSAQALSAMGLKGYAVGGLAVGEPQAVMLEMLDITCPELPADKPRYLMGVGTPDDILKSVARGIDMFDCVMPTRAGRHGLAYTRRGKVNLRNARHADDPRPLDEESDCPAARDYSRAYLHHLVRSQEALGAMLLTWNNLSYYQKLMQDIRAAIETQTFEARGAEITEGWARGDIPVL</sequence>
<name>TGT_RHILO</name>